<gene>
    <name evidence="1" type="primary">trhO</name>
    <name type="ordered locus">BcerKBAB4_1736</name>
</gene>
<comment type="function">
    <text evidence="1">Catalyzes oxygen-dependent 5-hydroxyuridine (ho5U) modification at position 34 in tRNAs.</text>
</comment>
<comment type="catalytic activity">
    <reaction evidence="1">
        <text>uridine(34) in tRNA + AH2 + O2 = 5-hydroxyuridine(34) in tRNA + A + H2O</text>
        <dbReference type="Rhea" id="RHEA:64224"/>
        <dbReference type="Rhea" id="RHEA-COMP:11727"/>
        <dbReference type="Rhea" id="RHEA-COMP:13381"/>
        <dbReference type="ChEBI" id="CHEBI:13193"/>
        <dbReference type="ChEBI" id="CHEBI:15377"/>
        <dbReference type="ChEBI" id="CHEBI:15379"/>
        <dbReference type="ChEBI" id="CHEBI:17499"/>
        <dbReference type="ChEBI" id="CHEBI:65315"/>
        <dbReference type="ChEBI" id="CHEBI:136877"/>
    </reaction>
</comment>
<comment type="similarity">
    <text evidence="1">Belongs to the TrhO family.</text>
</comment>
<sequence length="319" mass="36811">MATTKPYRVLLYYMYTTIENPEEFAEQHLEFCKSLELKGRILVATEGINGTCSGTVEQTEKYVEAMNNDPRFAGIVFKIDEADEHAFKKMHVRPRSELVTLRLEDDINPKEITGKYLEPKDFYEAMKQEDTVIIDARNDYEFDLGHFKGAIKPDIESFRELPDWIRENKETLEGKKILTYCTGGIRCEKFSGWLVREGYEDVSQLHGGIVTYGKDPEVQGELWDGQCYVFDERIAVPVNQKEHVIVGKDHFTGEPCERYVNCANPECNKKILCSEESEAKHLRACSHECRVHPRNRYIVQHELTEEQVAATLEKIEAGK</sequence>
<dbReference type="EC" id="1.14.-.-" evidence="1"/>
<dbReference type="EMBL" id="CP000903">
    <property type="protein sequence ID" value="ABY42971.1"/>
    <property type="molecule type" value="Genomic_DNA"/>
</dbReference>
<dbReference type="RefSeq" id="WP_002086277.1">
    <property type="nucleotide sequence ID" value="NC_010184.1"/>
</dbReference>
<dbReference type="SMR" id="A9VQI6"/>
<dbReference type="KEGG" id="bwe:BcerKBAB4_1736"/>
<dbReference type="eggNOG" id="COG1054">
    <property type="taxonomic scope" value="Bacteria"/>
</dbReference>
<dbReference type="HOGENOM" id="CLU_038878_1_0_9"/>
<dbReference type="Proteomes" id="UP000002154">
    <property type="component" value="Chromosome"/>
</dbReference>
<dbReference type="GO" id="GO:0016705">
    <property type="term" value="F:oxidoreductase activity, acting on paired donors, with incorporation or reduction of molecular oxygen"/>
    <property type="evidence" value="ECO:0007669"/>
    <property type="project" value="UniProtKB-UniRule"/>
</dbReference>
<dbReference type="GO" id="GO:0006400">
    <property type="term" value="P:tRNA modification"/>
    <property type="evidence" value="ECO:0007669"/>
    <property type="project" value="UniProtKB-UniRule"/>
</dbReference>
<dbReference type="CDD" id="cd01518">
    <property type="entry name" value="RHOD_YceA"/>
    <property type="match status" value="1"/>
</dbReference>
<dbReference type="Gene3D" id="3.30.70.100">
    <property type="match status" value="1"/>
</dbReference>
<dbReference type="Gene3D" id="3.40.250.10">
    <property type="entry name" value="Rhodanese-like domain"/>
    <property type="match status" value="1"/>
</dbReference>
<dbReference type="HAMAP" id="MF_00469">
    <property type="entry name" value="TrhO"/>
    <property type="match status" value="1"/>
</dbReference>
<dbReference type="InterPro" id="IPR001763">
    <property type="entry name" value="Rhodanese-like_dom"/>
</dbReference>
<dbReference type="InterPro" id="IPR036873">
    <property type="entry name" value="Rhodanese-like_dom_sf"/>
</dbReference>
<dbReference type="InterPro" id="IPR022111">
    <property type="entry name" value="Rhodanese_C"/>
</dbReference>
<dbReference type="InterPro" id="IPR020936">
    <property type="entry name" value="TrhO"/>
</dbReference>
<dbReference type="InterPro" id="IPR040503">
    <property type="entry name" value="TRHO_N"/>
</dbReference>
<dbReference type="NCBIfam" id="NF001135">
    <property type="entry name" value="PRK00142.1-3"/>
    <property type="match status" value="1"/>
</dbReference>
<dbReference type="PANTHER" id="PTHR43268:SF3">
    <property type="entry name" value="RHODANESE-LIKE DOMAIN-CONTAINING PROTEIN 7-RELATED"/>
    <property type="match status" value="1"/>
</dbReference>
<dbReference type="PANTHER" id="PTHR43268">
    <property type="entry name" value="THIOSULFATE SULFURTRANSFERASE/RHODANESE-LIKE DOMAIN-CONTAINING PROTEIN 2"/>
    <property type="match status" value="1"/>
</dbReference>
<dbReference type="Pfam" id="PF00581">
    <property type="entry name" value="Rhodanese"/>
    <property type="match status" value="1"/>
</dbReference>
<dbReference type="Pfam" id="PF12368">
    <property type="entry name" value="Rhodanese_C"/>
    <property type="match status" value="1"/>
</dbReference>
<dbReference type="Pfam" id="PF17773">
    <property type="entry name" value="UPF0176_N"/>
    <property type="match status" value="1"/>
</dbReference>
<dbReference type="SMART" id="SM00450">
    <property type="entry name" value="RHOD"/>
    <property type="match status" value="1"/>
</dbReference>
<dbReference type="SUPFAM" id="SSF52821">
    <property type="entry name" value="Rhodanese/Cell cycle control phosphatase"/>
    <property type="match status" value="1"/>
</dbReference>
<dbReference type="PROSITE" id="PS50206">
    <property type="entry name" value="RHODANESE_3"/>
    <property type="match status" value="1"/>
</dbReference>
<protein>
    <recommendedName>
        <fullName evidence="1">tRNA uridine(34) hydroxylase</fullName>
        <ecNumber evidence="1">1.14.-.-</ecNumber>
    </recommendedName>
    <alternativeName>
        <fullName evidence="1">tRNA hydroxylation protein O</fullName>
    </alternativeName>
</protein>
<feature type="chain" id="PRO_1000200341" description="tRNA uridine(34) hydroxylase">
    <location>
        <begin position="1"/>
        <end position="319"/>
    </location>
</feature>
<feature type="domain" description="Rhodanese" evidence="1">
    <location>
        <begin position="127"/>
        <end position="221"/>
    </location>
</feature>
<feature type="active site" description="Cysteine persulfide intermediate" evidence="1">
    <location>
        <position position="181"/>
    </location>
</feature>
<proteinExistence type="inferred from homology"/>
<evidence type="ECO:0000255" key="1">
    <source>
        <dbReference type="HAMAP-Rule" id="MF_00469"/>
    </source>
</evidence>
<keyword id="KW-0560">Oxidoreductase</keyword>
<keyword id="KW-0819">tRNA processing</keyword>
<accession>A9VQI6</accession>
<reference key="1">
    <citation type="journal article" date="2008" name="Chem. Biol. Interact.">
        <title>Extending the Bacillus cereus group genomics to putative food-borne pathogens of different toxicity.</title>
        <authorList>
            <person name="Lapidus A."/>
            <person name="Goltsman E."/>
            <person name="Auger S."/>
            <person name="Galleron N."/>
            <person name="Segurens B."/>
            <person name="Dossat C."/>
            <person name="Land M.L."/>
            <person name="Broussolle V."/>
            <person name="Brillard J."/>
            <person name="Guinebretiere M.-H."/>
            <person name="Sanchis V."/>
            <person name="Nguen-the C."/>
            <person name="Lereclus D."/>
            <person name="Richardson P."/>
            <person name="Wincker P."/>
            <person name="Weissenbach J."/>
            <person name="Ehrlich S.D."/>
            <person name="Sorokin A."/>
        </authorList>
    </citation>
    <scope>NUCLEOTIDE SEQUENCE [LARGE SCALE GENOMIC DNA]</scope>
    <source>
        <strain>KBAB4</strain>
    </source>
</reference>
<organism>
    <name type="scientific">Bacillus mycoides (strain KBAB4)</name>
    <name type="common">Bacillus weihenstephanensis</name>
    <dbReference type="NCBI Taxonomy" id="315730"/>
    <lineage>
        <taxon>Bacteria</taxon>
        <taxon>Bacillati</taxon>
        <taxon>Bacillota</taxon>
        <taxon>Bacilli</taxon>
        <taxon>Bacillales</taxon>
        <taxon>Bacillaceae</taxon>
        <taxon>Bacillus</taxon>
        <taxon>Bacillus cereus group</taxon>
    </lineage>
</organism>
<name>TRHO_BACMK</name>